<comment type="function">
    <text evidence="1">Catalyzes the dephosphorylation of undecaprenyl diphosphate (UPP).</text>
</comment>
<comment type="catalytic activity">
    <reaction evidence="1">
        <text>di-trans,octa-cis-undecaprenyl diphosphate + H2O = di-trans,octa-cis-undecaprenyl phosphate + phosphate + H(+)</text>
        <dbReference type="Rhea" id="RHEA:28094"/>
        <dbReference type="ChEBI" id="CHEBI:15377"/>
        <dbReference type="ChEBI" id="CHEBI:15378"/>
        <dbReference type="ChEBI" id="CHEBI:43474"/>
        <dbReference type="ChEBI" id="CHEBI:58405"/>
        <dbReference type="ChEBI" id="CHEBI:60392"/>
        <dbReference type="EC" id="3.6.1.27"/>
    </reaction>
</comment>
<comment type="subcellular location">
    <subcellularLocation>
        <location evidence="1">Cell membrane</location>
        <topology evidence="1">Multi-pass membrane protein</topology>
    </subcellularLocation>
</comment>
<comment type="similarity">
    <text evidence="1">Belongs to the UppP family.</text>
</comment>
<feature type="chain" id="PRO_1000197424" description="Undecaprenyl-diphosphatase">
    <location>
        <begin position="1"/>
        <end position="262"/>
    </location>
</feature>
<feature type="transmembrane region" description="Helical" evidence="1">
    <location>
        <begin position="15"/>
        <end position="35"/>
    </location>
</feature>
<feature type="transmembrane region" description="Helical" evidence="1">
    <location>
        <begin position="38"/>
        <end position="58"/>
    </location>
</feature>
<feature type="transmembrane region" description="Helical" evidence="1">
    <location>
        <begin position="91"/>
        <end position="111"/>
    </location>
</feature>
<feature type="transmembrane region" description="Helical" evidence="1">
    <location>
        <begin position="114"/>
        <end position="134"/>
    </location>
</feature>
<feature type="transmembrane region" description="Helical" evidence="1">
    <location>
        <begin position="149"/>
        <end position="169"/>
    </location>
</feature>
<feature type="transmembrane region" description="Helical" evidence="1">
    <location>
        <begin position="189"/>
        <end position="209"/>
    </location>
</feature>
<feature type="transmembrane region" description="Helical" evidence="1">
    <location>
        <begin position="219"/>
        <end position="239"/>
    </location>
</feature>
<feature type="transmembrane region" description="Helical" evidence="1">
    <location>
        <begin position="242"/>
        <end position="262"/>
    </location>
</feature>
<evidence type="ECO:0000255" key="1">
    <source>
        <dbReference type="HAMAP-Rule" id="MF_01006"/>
    </source>
</evidence>
<accession>B1L557</accession>
<reference key="1">
    <citation type="journal article" date="2008" name="Proc. Natl. Acad. Sci. U.S.A.">
        <title>A korarchaeal genome reveals new insights into the evolution of the Archaea.</title>
        <authorList>
            <person name="Elkins J.G."/>
            <person name="Podar M."/>
            <person name="Graham D.E."/>
            <person name="Makarova K.S."/>
            <person name="Wolf Y."/>
            <person name="Randau L."/>
            <person name="Hedlund B.P."/>
            <person name="Brochier-Armanet C."/>
            <person name="Kunin V."/>
            <person name="Anderson I."/>
            <person name="Lapidus A."/>
            <person name="Goltsman E."/>
            <person name="Barry K."/>
            <person name="Koonin E.V."/>
            <person name="Hugenholtz P."/>
            <person name="Kyrpides N."/>
            <person name="Wanner G."/>
            <person name="Richardson P."/>
            <person name="Keller M."/>
            <person name="Stetter K.O."/>
        </authorList>
    </citation>
    <scope>NUCLEOTIDE SEQUENCE [LARGE SCALE GENOMIC DNA]</scope>
    <source>
        <strain>OPF8</strain>
    </source>
</reference>
<keyword id="KW-1003">Cell membrane</keyword>
<keyword id="KW-0378">Hydrolase</keyword>
<keyword id="KW-0472">Membrane</keyword>
<keyword id="KW-1185">Reference proteome</keyword>
<keyword id="KW-0812">Transmembrane</keyword>
<keyword id="KW-1133">Transmembrane helix</keyword>
<proteinExistence type="inferred from homology"/>
<name>UPPP_KORCO</name>
<organism>
    <name type="scientific">Korarchaeum cryptofilum (strain OPF8)</name>
    <dbReference type="NCBI Taxonomy" id="374847"/>
    <lineage>
        <taxon>Archaea</taxon>
        <taxon>Thermoproteota</taxon>
        <taxon>Candidatus Korarchaeia</taxon>
        <taxon>Candidatus Korarchaeales</taxon>
        <taxon>Candidatus Korarchaeaceae</taxon>
        <taxon>Candidatus Korarchaeum</taxon>
    </lineage>
</organism>
<gene>
    <name evidence="1" type="primary">uppP</name>
    <name type="ordered locus">Kcr_0839</name>
</gene>
<protein>
    <recommendedName>
        <fullName evidence="1">Undecaprenyl-diphosphatase</fullName>
        <ecNumber evidence="1">3.6.1.27</ecNumber>
    </recommendedName>
    <alternativeName>
        <fullName evidence="1">Undecaprenyl pyrophosphate phosphatase</fullName>
    </alternativeName>
</protein>
<sequence length="262" mass="27995">MEIAQALILGIVQGLTEWLPISSSGHLVLLQIILLSRSSAAFIALVHAGTLLAVIVAFRRDVFNVIKSFLEGISELPKGSAFSSPERKLPLYILIGTVPVAVLGLALAKYVDEIFGSSKIVGVGLLITAALLYSTKWAGGERPLDLRRALIVGLAQSIAIFPGISRSGATISTALLSGLKREEAIRYSFLLSIPALTGFLILELIVSPAHEILNPEGLVGLLSSFITGLIAIKFLLSIIRRGRLHLFSYYCVIVGIAILSLL</sequence>
<dbReference type="EC" id="3.6.1.27" evidence="1"/>
<dbReference type="EMBL" id="CP000968">
    <property type="protein sequence ID" value="ACB07586.1"/>
    <property type="molecule type" value="Genomic_DNA"/>
</dbReference>
<dbReference type="RefSeq" id="WP_012309483.1">
    <property type="nucleotide sequence ID" value="NC_010482.1"/>
</dbReference>
<dbReference type="SMR" id="B1L557"/>
<dbReference type="STRING" id="374847.Kcr_0839"/>
<dbReference type="EnsemblBacteria" id="ACB07586">
    <property type="protein sequence ID" value="ACB07586"/>
    <property type="gene ID" value="Kcr_0839"/>
</dbReference>
<dbReference type="GeneID" id="6094117"/>
<dbReference type="KEGG" id="kcr:Kcr_0839"/>
<dbReference type="eggNOG" id="arCOG04761">
    <property type="taxonomic scope" value="Archaea"/>
</dbReference>
<dbReference type="HOGENOM" id="CLU_060296_1_0_2"/>
<dbReference type="InParanoid" id="B1L557"/>
<dbReference type="OrthoDB" id="65864at2157"/>
<dbReference type="PhylomeDB" id="B1L557"/>
<dbReference type="Proteomes" id="UP000001686">
    <property type="component" value="Chromosome"/>
</dbReference>
<dbReference type="GO" id="GO:0005886">
    <property type="term" value="C:plasma membrane"/>
    <property type="evidence" value="ECO:0000318"/>
    <property type="project" value="GO_Central"/>
</dbReference>
<dbReference type="GO" id="GO:0050380">
    <property type="term" value="F:undecaprenyl-diphosphatase activity"/>
    <property type="evidence" value="ECO:0000318"/>
    <property type="project" value="GO_Central"/>
</dbReference>
<dbReference type="GO" id="GO:0000270">
    <property type="term" value="P:peptidoglycan metabolic process"/>
    <property type="evidence" value="ECO:0000318"/>
    <property type="project" value="GO_Central"/>
</dbReference>
<dbReference type="HAMAP" id="MF_01006">
    <property type="entry name" value="Undec_diphosphatase"/>
    <property type="match status" value="1"/>
</dbReference>
<dbReference type="InterPro" id="IPR003824">
    <property type="entry name" value="UppP"/>
</dbReference>
<dbReference type="PANTHER" id="PTHR30622">
    <property type="entry name" value="UNDECAPRENYL-DIPHOSPHATASE"/>
    <property type="match status" value="1"/>
</dbReference>
<dbReference type="PANTHER" id="PTHR30622:SF2">
    <property type="entry name" value="UNDECAPRENYL-DIPHOSPHATASE"/>
    <property type="match status" value="1"/>
</dbReference>
<dbReference type="Pfam" id="PF02673">
    <property type="entry name" value="BacA"/>
    <property type="match status" value="1"/>
</dbReference>